<feature type="chain" id="PRO_0000204336" description="Sulfate transporter CysZ">
    <location>
        <begin position="1"/>
        <end position="253"/>
    </location>
</feature>
<feature type="topological domain" description="Cytoplasmic" evidence="6">
    <location>
        <begin position="1"/>
        <end position="30"/>
    </location>
</feature>
<feature type="transmembrane region" description="Helical" evidence="1">
    <location>
        <begin position="31"/>
        <end position="51"/>
    </location>
</feature>
<feature type="topological domain" description="Periplasmic" evidence="6">
    <location>
        <begin position="52"/>
        <end position="74"/>
    </location>
</feature>
<feature type="transmembrane region" description="Helical" evidence="1">
    <location>
        <begin position="75"/>
        <end position="95"/>
    </location>
</feature>
<feature type="topological domain" description="Cytoplasmic" evidence="6">
    <location>
        <begin position="96"/>
        <end position="150"/>
    </location>
</feature>
<feature type="transmembrane region" description="Helical" evidence="1">
    <location>
        <begin position="151"/>
        <end position="171"/>
    </location>
</feature>
<feature type="topological domain" description="Periplasmic" evidence="6">
    <location>
        <begin position="172"/>
        <end position="221"/>
    </location>
</feature>
<feature type="transmembrane region" description="Helical" evidence="1">
    <location>
        <begin position="222"/>
        <end position="242"/>
    </location>
</feature>
<feature type="topological domain" description="Cytoplasmic" evidence="2">
    <location>
        <begin position="243"/>
        <end position="253"/>
    </location>
</feature>
<keyword id="KW-0028">Amino-acid biosynthesis</keyword>
<keyword id="KW-0997">Cell inner membrane</keyword>
<keyword id="KW-1003">Cell membrane</keyword>
<keyword id="KW-0198">Cysteine biosynthesis</keyword>
<keyword id="KW-0472">Membrane</keyword>
<keyword id="KW-1185">Reference proteome</keyword>
<keyword id="KW-0764">Sulfate transport</keyword>
<keyword id="KW-0812">Transmembrane</keyword>
<keyword id="KW-1133">Transmembrane helix</keyword>
<keyword id="KW-0813">Transport</keyword>
<evidence type="ECO:0000255" key="1">
    <source>
        <dbReference type="HAMAP-Rule" id="MF_00468"/>
    </source>
</evidence>
<evidence type="ECO:0000269" key="2">
    <source>
    </source>
</evidence>
<evidence type="ECO:0000269" key="3">
    <source>
    </source>
</evidence>
<evidence type="ECO:0000303" key="4">
    <source>
    </source>
</evidence>
<evidence type="ECO:0000303" key="5">
    <source>
    </source>
</evidence>
<evidence type="ECO:0000305" key="6"/>
<dbReference type="EMBL" id="U00096">
    <property type="protein sequence ID" value="AAC75466.1"/>
    <property type="molecule type" value="Genomic_DNA"/>
</dbReference>
<dbReference type="EMBL" id="AP009048">
    <property type="protein sequence ID" value="BAA16287.2"/>
    <property type="molecule type" value="Genomic_DNA"/>
</dbReference>
<dbReference type="EMBL" id="U74650">
    <property type="protein sequence ID" value="AAB42060.1"/>
    <property type="molecule type" value="Genomic_DNA"/>
</dbReference>
<dbReference type="EMBL" id="M21451">
    <property type="protein sequence ID" value="AAA23653.1"/>
    <property type="molecule type" value="Genomic_DNA"/>
</dbReference>
<dbReference type="EMBL" id="X12615">
    <property type="protein sequence ID" value="CAA31136.1"/>
    <property type="molecule type" value="Genomic_DNA"/>
</dbReference>
<dbReference type="PIR" id="D65015">
    <property type="entry name" value="BVECCZ"/>
</dbReference>
<dbReference type="RefSeq" id="NP_416908.1">
    <property type="nucleotide sequence ID" value="NC_000913.3"/>
</dbReference>
<dbReference type="RefSeq" id="WP_000254839.1">
    <property type="nucleotide sequence ID" value="NZ_SSZK01000005.1"/>
</dbReference>
<dbReference type="SMR" id="P0A6J3"/>
<dbReference type="BioGRID" id="4259702">
    <property type="interactions" value="13"/>
</dbReference>
<dbReference type="FunCoup" id="P0A6J3">
    <property type="interactions" value="35"/>
</dbReference>
<dbReference type="STRING" id="511145.b2413"/>
<dbReference type="TCDB" id="2.A.121.1.1">
    <property type="family name" value="the sulfate transporter (cysz) family"/>
</dbReference>
<dbReference type="jPOST" id="P0A6J3"/>
<dbReference type="PaxDb" id="511145-b2413"/>
<dbReference type="DNASU" id="946875"/>
<dbReference type="EnsemblBacteria" id="AAC75466">
    <property type="protein sequence ID" value="AAC75466"/>
    <property type="gene ID" value="b2413"/>
</dbReference>
<dbReference type="GeneID" id="93774718"/>
<dbReference type="GeneID" id="946875"/>
<dbReference type="KEGG" id="ecj:JW2406"/>
<dbReference type="KEGG" id="eco:b2413"/>
<dbReference type="KEGG" id="ecoc:C3026_13415"/>
<dbReference type="PATRIC" id="fig|1411691.4.peg.4318"/>
<dbReference type="EchoBASE" id="EB0003"/>
<dbReference type="eggNOG" id="COG2981">
    <property type="taxonomic scope" value="Bacteria"/>
</dbReference>
<dbReference type="HOGENOM" id="CLU_070331_1_0_6"/>
<dbReference type="InParanoid" id="P0A6J3"/>
<dbReference type="OMA" id="PFADDWS"/>
<dbReference type="OrthoDB" id="5292355at2"/>
<dbReference type="PhylomeDB" id="P0A6J3"/>
<dbReference type="BioCyc" id="EcoCyc:EG10003-MONOMER"/>
<dbReference type="BioCyc" id="MetaCyc:EG10003-MONOMER"/>
<dbReference type="SABIO-RK" id="P0A6J3"/>
<dbReference type="PRO" id="PR:P0A6J3"/>
<dbReference type="Proteomes" id="UP000000625">
    <property type="component" value="Chromosome"/>
</dbReference>
<dbReference type="GO" id="GO:0005886">
    <property type="term" value="C:plasma membrane"/>
    <property type="evidence" value="ECO:0000314"/>
    <property type="project" value="EcoCyc"/>
</dbReference>
<dbReference type="GO" id="GO:0009675">
    <property type="term" value="F:high-affinity sulfate:proton symporter activity"/>
    <property type="evidence" value="ECO:0000314"/>
    <property type="project" value="EcoCyc"/>
</dbReference>
<dbReference type="GO" id="GO:0015116">
    <property type="term" value="F:sulfate transmembrane transporter activity"/>
    <property type="evidence" value="ECO:0000314"/>
    <property type="project" value="EcoCyc"/>
</dbReference>
<dbReference type="GO" id="GO:0019344">
    <property type="term" value="P:cysteine biosynthetic process"/>
    <property type="evidence" value="ECO:0000314"/>
    <property type="project" value="EcoCyc"/>
</dbReference>
<dbReference type="GO" id="GO:0000103">
    <property type="term" value="P:sulfate assimilation"/>
    <property type="evidence" value="ECO:0000315"/>
    <property type="project" value="EcoCyc"/>
</dbReference>
<dbReference type="GO" id="GO:1902358">
    <property type="term" value="P:sulfate transmembrane transport"/>
    <property type="evidence" value="ECO:0000314"/>
    <property type="project" value="EcoCyc"/>
</dbReference>
<dbReference type="HAMAP" id="MF_00468">
    <property type="entry name" value="CysZ"/>
    <property type="match status" value="1"/>
</dbReference>
<dbReference type="InterPro" id="IPR050480">
    <property type="entry name" value="CysZ_sulfate_transptr"/>
</dbReference>
<dbReference type="InterPro" id="IPR022985">
    <property type="entry name" value="Sulfate_CysZ"/>
</dbReference>
<dbReference type="NCBIfam" id="NF003433">
    <property type="entry name" value="PRK04949.1"/>
    <property type="match status" value="1"/>
</dbReference>
<dbReference type="PANTHER" id="PTHR37468">
    <property type="entry name" value="SULFATE TRANSPORTER CYSZ"/>
    <property type="match status" value="1"/>
</dbReference>
<dbReference type="PANTHER" id="PTHR37468:SF1">
    <property type="entry name" value="SULFATE TRANSPORTER CYSZ"/>
    <property type="match status" value="1"/>
</dbReference>
<dbReference type="Pfam" id="PF07264">
    <property type="entry name" value="EI24"/>
    <property type="match status" value="1"/>
</dbReference>
<comment type="function">
    <text evidence="3">High affinity, high specificity proton-dependent sulfate transporter, which mediates sulfate uptake. Provides the sulfur source for the cysteine synthesis pathway. Does not transport thiosulfate.</text>
</comment>
<comment type="activity regulation">
    <text evidence="3">Inhibited by sulfite.</text>
</comment>
<comment type="biophysicochemical properties">
    <kinetics>
        <KM evidence="3">0.72 uM for sulfate</KM>
        <KM evidence="3">1.3 uM for sulfate (in the presence of 5 uM sulfite)</KM>
    </kinetics>
</comment>
<comment type="subcellular location">
    <subcellularLocation>
        <location evidence="1 2">Cell inner membrane</location>
        <topology evidence="1">Multi-pass membrane protein</topology>
    </subcellularLocation>
</comment>
<comment type="similarity">
    <text evidence="1 6">Belongs to the CysZ family.</text>
</comment>
<protein>
    <recommendedName>
        <fullName evidence="1 4">Sulfate transporter CysZ</fullName>
    </recommendedName>
</protein>
<reference key="1">
    <citation type="journal article" date="1997" name="DNA Res.">
        <title>Construction of a contiguous 874-kb sequence of the Escherichia coli-K12 genome corresponding to 50.0-68.8 min on the linkage map and analysis of its sequence features.</title>
        <authorList>
            <person name="Yamamoto Y."/>
            <person name="Aiba H."/>
            <person name="Baba T."/>
            <person name="Hayashi K."/>
            <person name="Inada T."/>
            <person name="Isono K."/>
            <person name="Itoh T."/>
            <person name="Kimura S."/>
            <person name="Kitagawa M."/>
            <person name="Makino K."/>
            <person name="Miki T."/>
            <person name="Mitsuhashi N."/>
            <person name="Mizobuchi K."/>
            <person name="Mori H."/>
            <person name="Nakade S."/>
            <person name="Nakamura Y."/>
            <person name="Nashimoto H."/>
            <person name="Oshima T."/>
            <person name="Oyama S."/>
            <person name="Saito N."/>
            <person name="Sampei G."/>
            <person name="Satoh Y."/>
            <person name="Sivasundaram S."/>
            <person name="Tagami H."/>
            <person name="Takahashi H."/>
            <person name="Takeda J."/>
            <person name="Takemoto K."/>
            <person name="Uehara K."/>
            <person name="Wada C."/>
            <person name="Yamagata S."/>
            <person name="Horiuchi T."/>
        </authorList>
    </citation>
    <scope>NUCLEOTIDE SEQUENCE [LARGE SCALE GENOMIC DNA]</scope>
    <source>
        <strain>K12 / W3110 / ATCC 27325 / DSM 5911</strain>
    </source>
</reference>
<reference key="2">
    <citation type="journal article" date="1997" name="Science">
        <title>The complete genome sequence of Escherichia coli K-12.</title>
        <authorList>
            <person name="Blattner F.R."/>
            <person name="Plunkett G. III"/>
            <person name="Bloch C.A."/>
            <person name="Perna N.T."/>
            <person name="Burland V."/>
            <person name="Riley M."/>
            <person name="Collado-Vides J."/>
            <person name="Glasner J.D."/>
            <person name="Rode C.K."/>
            <person name="Mayhew G.F."/>
            <person name="Gregor J."/>
            <person name="Davis N.W."/>
            <person name="Kirkpatrick H.A."/>
            <person name="Goeden M.A."/>
            <person name="Rose D.J."/>
            <person name="Mau B."/>
            <person name="Shao Y."/>
        </authorList>
    </citation>
    <scope>NUCLEOTIDE SEQUENCE [LARGE SCALE GENOMIC DNA]</scope>
    <source>
        <strain>K12 / MG1655 / ATCC 47076</strain>
    </source>
</reference>
<reference key="3">
    <citation type="journal article" date="2006" name="Mol. Syst. Biol.">
        <title>Highly accurate genome sequences of Escherichia coli K-12 strains MG1655 and W3110.</title>
        <authorList>
            <person name="Hayashi K."/>
            <person name="Morooka N."/>
            <person name="Yamamoto Y."/>
            <person name="Fujita K."/>
            <person name="Isono K."/>
            <person name="Choi S."/>
            <person name="Ohtsubo E."/>
            <person name="Baba T."/>
            <person name="Wanner B.L."/>
            <person name="Mori H."/>
            <person name="Horiuchi T."/>
        </authorList>
    </citation>
    <scope>NUCLEOTIDE SEQUENCE [LARGE SCALE GENOMIC DNA]</scope>
    <source>
        <strain>K12 / W3110 / ATCC 27325 / DSM 5911</strain>
    </source>
</reference>
<reference key="4">
    <citation type="journal article" date="1997" name="Cell">
        <title>Direct binding of FtsZ to ZipA, an essential component of the septal ring structure that mediates cell division in E. coli.</title>
        <authorList>
            <person name="Hale C.A."/>
            <person name="de Boer P.A.J."/>
        </authorList>
    </citation>
    <scope>NUCLEOTIDE SEQUENCE [GENOMIC DNA] OF 1-58</scope>
    <source>
        <strain>PB103</strain>
    </source>
</reference>
<reference key="5">
    <citation type="journal article" date="1988" name="J. Bacteriol.">
        <title>DNA sequences of the cysK regions of Salmonella typhimurium and Escherichia coli and linkage of the cysK regions to ptsH.</title>
        <authorList>
            <person name="Byrne C.R."/>
            <person name="Monroe R.S."/>
            <person name="Ward K.A."/>
            <person name="Kredich N.M."/>
        </authorList>
    </citation>
    <scope>NUCLEOTIDE SEQUENCE [GENOMIC DNA] OF 58-253</scope>
    <source>
        <strain>K12</strain>
    </source>
</reference>
<reference key="6">
    <citation type="journal article" date="1988" name="Mol. Microbiol.">
        <title>Phylogeny of metabolic pathways: O-acetylserine sulphydrylase A is homologous to the tryptophan synthase beta subunit.</title>
        <authorList>
            <person name="Levy S."/>
            <person name="Danchin A."/>
        </authorList>
    </citation>
    <scope>NUCLEOTIDE SEQUENCE [GENOMIC DNA] OF 58-253</scope>
</reference>
<reference key="7">
    <citation type="journal article" date="2005" name="Science">
        <title>Global topology analysis of the Escherichia coli inner membrane proteome.</title>
        <authorList>
            <person name="Daley D.O."/>
            <person name="Rapp M."/>
            <person name="Granseth E."/>
            <person name="Melen K."/>
            <person name="Drew D."/>
            <person name="von Heijne G."/>
        </authorList>
    </citation>
    <scope>TOPOLOGY [LARGE SCALE ANALYSIS]</scope>
    <source>
        <strain>K12 / MG1655 / ATCC 47076</strain>
    </source>
</reference>
<reference key="8">
    <citation type="journal article" date="2014" name="Biochim. Biophys. Acta">
        <title>The Escherichia coli CysZ is a pH dependent sulfate transporter that can be inhibited by sulfite.</title>
        <authorList>
            <person name="Zhang L."/>
            <person name="Jiang W."/>
            <person name="Nan J."/>
            <person name="Almqvist J."/>
            <person name="Huang Y."/>
        </authorList>
    </citation>
    <scope>FUNCTION</scope>
    <scope>ACTIVITY REGULATION</scope>
    <scope>BIOPHYSICOCHEMICAL PROPERTIES</scope>
    <source>
        <strain>K12</strain>
    </source>
</reference>
<accession>P0A6J3</accession>
<accession>P12610</accession>
<accession>P76533</accession>
<accession>P76961</accession>
<accession>P76962</accession>
<proteinExistence type="evidence at protein level"/>
<gene>
    <name evidence="1 5" type="primary">cysZ</name>
    <name type="ordered locus">b2413</name>
    <name type="ordered locus">JW2406</name>
</gene>
<organism>
    <name type="scientific">Escherichia coli (strain K12)</name>
    <dbReference type="NCBI Taxonomy" id="83333"/>
    <lineage>
        <taxon>Bacteria</taxon>
        <taxon>Pseudomonadati</taxon>
        <taxon>Pseudomonadota</taxon>
        <taxon>Gammaproteobacteria</taxon>
        <taxon>Enterobacterales</taxon>
        <taxon>Enterobacteriaceae</taxon>
        <taxon>Escherichia</taxon>
    </lineage>
</organism>
<sequence length="253" mass="29305">MVSSFTSAPRSGFYYFAQGWKLVSQPGIRRFVILPLLVNILLMGGAFWWLFTQLDVWIPTLMSYVPDWLQWLSYLLWPLAVISVLLVFGYFFSTIANWIAAPFNGLLAEQLEARLTGATPPDTGIFGIMKDVPRIMKREWQKFAWYLPRAIVLLILYFIPGIGQTVAPVLWFLFSAWMLAIQYCDYPFDNHKVPFKEMRTALRTRKITNMQFGALTSLFTMIPLLNLFIMPVAVCGATAMWVDCYRDKHAMWR</sequence>
<name>CYSZ_ECOLI</name>